<accession>Q1XDM4</accession>
<keyword id="KW-0042">Antenna complex</keyword>
<keyword id="KW-0089">Bile pigment</keyword>
<keyword id="KW-0150">Chloroplast</keyword>
<keyword id="KW-0157">Chromophore</keyword>
<keyword id="KW-0249">Electron transport</keyword>
<keyword id="KW-0456">Lyase</keyword>
<keyword id="KW-0472">Membrane</keyword>
<keyword id="KW-0602">Photosynthesis</keyword>
<keyword id="KW-0605">Phycobilisome</keyword>
<keyword id="KW-0934">Plastid</keyword>
<keyword id="KW-0677">Repeat</keyword>
<keyword id="KW-0793">Thylakoid</keyword>
<keyword id="KW-0813">Transport</keyword>
<protein>
    <recommendedName>
        <fullName>Phycobiliprotein ApcE</fullName>
        <ecNumber>4.-.-.-</ecNumber>
    </recommendedName>
    <alternativeName>
        <fullName>Anchor polypeptide</fullName>
    </alternativeName>
    <alternativeName>
        <fullName>PBS-anchor protein</fullName>
    </alternativeName>
    <alternativeName>
        <fullName>Phycobilisome linker polypeptide</fullName>
    </alternativeName>
</protein>
<geneLocation type="chloroplast"/>
<proteinExistence type="inferred from homology"/>
<feature type="chain" id="PRO_0000277340" description="Phycobiliprotein ApcE">
    <location>
        <begin position="1"/>
        <end position="886"/>
    </location>
</feature>
<feature type="domain" description="PBS-linker 1" evidence="3">
    <location>
        <begin position="244"/>
        <end position="424"/>
    </location>
</feature>
<feature type="domain" description="PBS-linker 2" evidence="3">
    <location>
        <begin position="496"/>
        <end position="678"/>
    </location>
</feature>
<feature type="domain" description="PBS-linker 3" evidence="3">
    <location>
        <begin position="695"/>
        <end position="876"/>
    </location>
</feature>
<feature type="binding site" description="covalent" evidence="2">
    <location>
        <position position="187"/>
    </location>
    <ligand>
        <name>(2R,3E)-phycocyanobilin</name>
        <dbReference type="ChEBI" id="CHEBI:85275"/>
    </ligand>
</feature>
<dbReference type="EC" id="4.-.-.-"/>
<dbReference type="EMBL" id="AP006715">
    <property type="protein sequence ID" value="BAE92387.1"/>
    <property type="molecule type" value="Genomic_DNA"/>
</dbReference>
<dbReference type="RefSeq" id="YP_536944.1">
    <property type="nucleotide sequence ID" value="NC_007932.1"/>
</dbReference>
<dbReference type="SMR" id="Q1XDM4"/>
<dbReference type="GeneID" id="3978830"/>
<dbReference type="GO" id="GO:0009535">
    <property type="term" value="C:chloroplast thylakoid membrane"/>
    <property type="evidence" value="ECO:0007669"/>
    <property type="project" value="UniProtKB-SubCell"/>
</dbReference>
<dbReference type="GO" id="GO:0030089">
    <property type="term" value="C:phycobilisome"/>
    <property type="evidence" value="ECO:0007669"/>
    <property type="project" value="UniProtKB-KW"/>
</dbReference>
<dbReference type="GO" id="GO:0016829">
    <property type="term" value="F:lyase activity"/>
    <property type="evidence" value="ECO:0007669"/>
    <property type="project" value="UniProtKB-KW"/>
</dbReference>
<dbReference type="GO" id="GO:0015979">
    <property type="term" value="P:photosynthesis"/>
    <property type="evidence" value="ECO:0007669"/>
    <property type="project" value="UniProtKB-KW"/>
</dbReference>
<dbReference type="CDD" id="cd12128">
    <property type="entry name" value="PBP_PBS-LCM"/>
    <property type="match status" value="1"/>
</dbReference>
<dbReference type="Gene3D" id="1.10.3130.20">
    <property type="entry name" value="Phycobilisome linker domain"/>
    <property type="match status" value="3"/>
</dbReference>
<dbReference type="Gene3D" id="1.10.490.20">
    <property type="entry name" value="Phycocyanins"/>
    <property type="match status" value="1"/>
</dbReference>
<dbReference type="InterPro" id="IPR009050">
    <property type="entry name" value="Globin-like_sf"/>
</dbReference>
<dbReference type="InterPro" id="IPR001297">
    <property type="entry name" value="PBS_linker_dom"/>
</dbReference>
<dbReference type="InterPro" id="IPR038255">
    <property type="entry name" value="PBS_linker_sf"/>
</dbReference>
<dbReference type="InterPro" id="IPR012128">
    <property type="entry name" value="Phycobilisome_asu/bsu"/>
</dbReference>
<dbReference type="InterPro" id="IPR038719">
    <property type="entry name" value="Phycobilisome_asu/bsu_sf"/>
</dbReference>
<dbReference type="PANTHER" id="PTHR34011:SF6">
    <property type="entry name" value="PHYCOBILIPROTEIN APCE"/>
    <property type="match status" value="1"/>
</dbReference>
<dbReference type="PANTHER" id="PTHR34011">
    <property type="entry name" value="PHYCOBILISOME 32.1 KDA LINKER POLYPEPTIDE, PHYCOCYANIN-ASSOCIATED, ROD 2-RELATED"/>
    <property type="match status" value="1"/>
</dbReference>
<dbReference type="Pfam" id="PF00427">
    <property type="entry name" value="PBS_linker_poly"/>
    <property type="match status" value="3"/>
</dbReference>
<dbReference type="Pfam" id="PF00502">
    <property type="entry name" value="Phycobilisome"/>
    <property type="match status" value="2"/>
</dbReference>
<dbReference type="SUPFAM" id="SSF46458">
    <property type="entry name" value="Globin-like"/>
    <property type="match status" value="1"/>
</dbReference>
<dbReference type="PROSITE" id="PS51445">
    <property type="entry name" value="PBS_LINKER"/>
    <property type="match status" value="3"/>
</dbReference>
<sequence length="886" mass="100273">MSIKASGGSPLARPQLYRTASILTITQAEQQDRFLQLGELNQLVSFLNSGQKRLEVADILTKNANILVARAADKIFVGGSAISYLERPQAAVIIAGDQSSQDKINELSGNIQGDFGQSFRSLFNAGGATPPGFKPINVLRYGTTRMRKSLRDLDWFLRYLTYAIVSGDPNILSVNIRGLRELIDNACSSAAAIVALREMRRTALLIFEEDIKGQDLVKEYFNVVISEFEAPSLTDKLRKRISGDLQGLRLPQTYVQAGVSTPRFVMKPSLSADEKNIVVKACYRQIFERDIAKAYDLSLSNLESQVKNGQISIKEFIRSLGTSSIYRKQFYEPFVNSRALELAFRHFLGRGPSSLEEFQKYFAILSSTGLSGLVNALLNSSEYTDYFGEETVPYFRNLGEEPQECRNWGPQIDLLTYSAPFRKVPQFITLFSDYKQSLPDQHPYGIGNDPLSIQFGAIFPKENKDPRKRQALFGKDTRRILVRRGPGIYNQISNPQVRPKSAGSLGPKIFKLSNALIKSDSSQNFENSVEVVTKVAYLRVFGREVYQEEKLILKPIESQLKDNQITVREFVRQLAKSSIFRSLYWEPLYICKAIEYIHNRLLGRPTYGRQEINKYFDIAYKQGYYQVIDTIIDSSEYTETFGDNTVPYERYSTPAGVALRSLRPGIIDQRFKKVIASKSARFVELGTVKEMRSSNDIQSRISQGVTSLRDQSIVFEVNSDSNKEMLEQALRAAYRQIFERDLNSFSVGGEFLDIKSAFLNRQICVKELVEKLALSELYGKEFYQPYPNTKVIELGTKHILGRAPNNQAEIRFFNQILASKGLSAFISNLVESVEYNAVYGKDTVPYRRFPTLPAANFPNTETLYNRLTKQDISIVVPSFKKVLGNQ</sequence>
<evidence type="ECO:0000250" key="1"/>
<evidence type="ECO:0000255" key="2"/>
<evidence type="ECO:0000255" key="3">
    <source>
        <dbReference type="PROSITE-ProRule" id="PRU00775"/>
    </source>
</evidence>
<evidence type="ECO:0000305" key="4"/>
<comment type="function">
    <text evidence="1">This protein is postulated to act both as terminal energy acceptor and as a linker polypeptide that stabilizes the phycobilisome architecture. May have intrinsic bilin lyase activity (By similarity).</text>
</comment>
<comment type="subcellular location">
    <subcellularLocation>
        <location evidence="1">Plastid</location>
        <location evidence="1">Chloroplast thylakoid membrane</location>
        <topology evidence="1">Peripheral membrane protein</topology>
        <orientation evidence="1">Stromal side</orientation>
    </subcellularLocation>
</comment>
<comment type="PTM">
    <text evidence="4">Contains one covalently linked bilin chromophore. This protein autochromophorylates (Potential).</text>
</comment>
<comment type="similarity">
    <text evidence="3">Belongs to the phycobilisome linker protein family.</text>
</comment>
<reference key="1">
    <citation type="submission" date="2003-11" db="EMBL/GenBank/DDBJ databases">
        <title>Whole genome sequence of Porphyra yezoensis chloroplast.</title>
        <authorList>
            <person name="Kunimoto M."/>
            <person name="Morishima K."/>
            <person name="Yoshikawa M."/>
            <person name="Fukuda S."/>
            <person name="Kobayashi T."/>
            <person name="Kobayashi M."/>
            <person name="Okazaki T."/>
            <person name="Ohara I."/>
            <person name="Nakayama I."/>
        </authorList>
    </citation>
    <scope>NUCLEOTIDE SEQUENCE [LARGE SCALE GENOMIC DNA]</scope>
    <source>
        <strain>U-51</strain>
    </source>
</reference>
<gene>
    <name type="primary">apcE</name>
</gene>
<organism>
    <name type="scientific">Pyropia yezoensis</name>
    <name type="common">Susabi-nori</name>
    <name type="synonym">Porphyra yezoensis</name>
    <dbReference type="NCBI Taxonomy" id="2788"/>
    <lineage>
        <taxon>Eukaryota</taxon>
        <taxon>Rhodophyta</taxon>
        <taxon>Bangiophyceae</taxon>
        <taxon>Bangiales</taxon>
        <taxon>Bangiaceae</taxon>
        <taxon>Pyropia</taxon>
    </lineage>
</organism>
<name>APCE_PYRYE</name>